<feature type="chain" id="PRO_1000014908" description="Chaperone protein HtpG">
    <location>
        <begin position="1"/>
        <end position="608"/>
    </location>
</feature>
<feature type="region of interest" description="A; substrate-binding" evidence="1">
    <location>
        <begin position="1"/>
        <end position="332"/>
    </location>
</feature>
<feature type="region of interest" description="B" evidence="1">
    <location>
        <begin position="333"/>
        <end position="536"/>
    </location>
</feature>
<feature type="region of interest" description="C" evidence="1">
    <location>
        <begin position="537"/>
        <end position="608"/>
    </location>
</feature>
<organism>
    <name type="scientific">Campylobacter jejuni subsp. jejuni serotype O:23/36 (strain 81-176)</name>
    <dbReference type="NCBI Taxonomy" id="354242"/>
    <lineage>
        <taxon>Bacteria</taxon>
        <taxon>Pseudomonadati</taxon>
        <taxon>Campylobacterota</taxon>
        <taxon>Epsilonproteobacteria</taxon>
        <taxon>Campylobacterales</taxon>
        <taxon>Campylobacteraceae</taxon>
        <taxon>Campylobacter</taxon>
    </lineage>
</organism>
<dbReference type="EMBL" id="CP000538">
    <property type="protein sequence ID" value="EAQ73192.1"/>
    <property type="molecule type" value="Genomic_DNA"/>
</dbReference>
<dbReference type="RefSeq" id="WP_002869314.1">
    <property type="nucleotide sequence ID" value="NC_008787.1"/>
</dbReference>
<dbReference type="SMR" id="A1VYN0"/>
<dbReference type="KEGG" id="cjj:CJJ81176_0546"/>
<dbReference type="eggNOG" id="COG0326">
    <property type="taxonomic scope" value="Bacteria"/>
</dbReference>
<dbReference type="HOGENOM" id="CLU_006684_3_0_7"/>
<dbReference type="Proteomes" id="UP000000646">
    <property type="component" value="Chromosome"/>
</dbReference>
<dbReference type="GO" id="GO:0005737">
    <property type="term" value="C:cytoplasm"/>
    <property type="evidence" value="ECO:0007669"/>
    <property type="project" value="UniProtKB-SubCell"/>
</dbReference>
<dbReference type="GO" id="GO:0005524">
    <property type="term" value="F:ATP binding"/>
    <property type="evidence" value="ECO:0007669"/>
    <property type="project" value="UniProtKB-UniRule"/>
</dbReference>
<dbReference type="GO" id="GO:0016887">
    <property type="term" value="F:ATP hydrolysis activity"/>
    <property type="evidence" value="ECO:0007669"/>
    <property type="project" value="InterPro"/>
</dbReference>
<dbReference type="GO" id="GO:0140662">
    <property type="term" value="F:ATP-dependent protein folding chaperone"/>
    <property type="evidence" value="ECO:0007669"/>
    <property type="project" value="InterPro"/>
</dbReference>
<dbReference type="GO" id="GO:0051082">
    <property type="term" value="F:unfolded protein binding"/>
    <property type="evidence" value="ECO:0007669"/>
    <property type="project" value="UniProtKB-UniRule"/>
</dbReference>
<dbReference type="CDD" id="cd16927">
    <property type="entry name" value="HATPase_Hsp90-like"/>
    <property type="match status" value="1"/>
</dbReference>
<dbReference type="FunFam" id="3.30.565.10:FF:000009">
    <property type="entry name" value="Molecular chaperone HtpG"/>
    <property type="match status" value="1"/>
</dbReference>
<dbReference type="Gene3D" id="3.30.230.80">
    <property type="match status" value="1"/>
</dbReference>
<dbReference type="Gene3D" id="3.40.50.11260">
    <property type="match status" value="1"/>
</dbReference>
<dbReference type="Gene3D" id="1.20.120.790">
    <property type="entry name" value="Heat shock protein 90, C-terminal domain"/>
    <property type="match status" value="1"/>
</dbReference>
<dbReference type="Gene3D" id="3.30.565.10">
    <property type="entry name" value="Histidine kinase-like ATPase, C-terminal domain"/>
    <property type="match status" value="1"/>
</dbReference>
<dbReference type="HAMAP" id="MF_00505">
    <property type="entry name" value="HSP90"/>
    <property type="match status" value="1"/>
</dbReference>
<dbReference type="InterPro" id="IPR036890">
    <property type="entry name" value="HATPase_C_sf"/>
</dbReference>
<dbReference type="InterPro" id="IPR019805">
    <property type="entry name" value="Heat_shock_protein_90_CS"/>
</dbReference>
<dbReference type="InterPro" id="IPR037196">
    <property type="entry name" value="HSP90_C"/>
</dbReference>
<dbReference type="InterPro" id="IPR001404">
    <property type="entry name" value="Hsp90_fam"/>
</dbReference>
<dbReference type="InterPro" id="IPR020575">
    <property type="entry name" value="Hsp90_N"/>
</dbReference>
<dbReference type="InterPro" id="IPR020568">
    <property type="entry name" value="Ribosomal_Su5_D2-typ_SF"/>
</dbReference>
<dbReference type="NCBIfam" id="NF003555">
    <property type="entry name" value="PRK05218.1"/>
    <property type="match status" value="1"/>
</dbReference>
<dbReference type="PANTHER" id="PTHR11528">
    <property type="entry name" value="HEAT SHOCK PROTEIN 90 FAMILY MEMBER"/>
    <property type="match status" value="1"/>
</dbReference>
<dbReference type="Pfam" id="PF13589">
    <property type="entry name" value="HATPase_c_3"/>
    <property type="match status" value="1"/>
</dbReference>
<dbReference type="Pfam" id="PF00183">
    <property type="entry name" value="HSP90"/>
    <property type="match status" value="1"/>
</dbReference>
<dbReference type="PIRSF" id="PIRSF002583">
    <property type="entry name" value="Hsp90"/>
    <property type="match status" value="1"/>
</dbReference>
<dbReference type="PRINTS" id="PR00775">
    <property type="entry name" value="HEATSHOCK90"/>
</dbReference>
<dbReference type="SMART" id="SM00387">
    <property type="entry name" value="HATPase_c"/>
    <property type="match status" value="1"/>
</dbReference>
<dbReference type="SUPFAM" id="SSF55874">
    <property type="entry name" value="ATPase domain of HSP90 chaperone/DNA topoisomerase II/histidine kinase"/>
    <property type="match status" value="1"/>
</dbReference>
<dbReference type="SUPFAM" id="SSF110942">
    <property type="entry name" value="HSP90 C-terminal domain"/>
    <property type="match status" value="1"/>
</dbReference>
<dbReference type="SUPFAM" id="SSF54211">
    <property type="entry name" value="Ribosomal protein S5 domain 2-like"/>
    <property type="match status" value="1"/>
</dbReference>
<dbReference type="PROSITE" id="PS00298">
    <property type="entry name" value="HSP90"/>
    <property type="match status" value="1"/>
</dbReference>
<accession>A1VYN0</accession>
<comment type="function">
    <text evidence="1">Molecular chaperone. Has ATPase activity.</text>
</comment>
<comment type="subunit">
    <text evidence="1">Homodimer.</text>
</comment>
<comment type="subcellular location">
    <subcellularLocation>
        <location evidence="1">Cytoplasm</location>
    </subcellularLocation>
</comment>
<comment type="similarity">
    <text evidence="1">Belongs to the heat shock protein 90 family.</text>
</comment>
<protein>
    <recommendedName>
        <fullName evidence="1">Chaperone protein HtpG</fullName>
    </recommendedName>
    <alternativeName>
        <fullName evidence="1">Heat shock protein HtpG</fullName>
    </alternativeName>
    <alternativeName>
        <fullName evidence="1">High temperature protein G</fullName>
    </alternativeName>
</protein>
<sequence>MQFQTEVNQLLQLMIHSLYSNKEIFLRELISNASDALDKLNFLSVSDDKYKSLKFEPKIEIKIDKDKKTLSISDNGIGMDKDDLINNLGTIAKSGTKSFLENLSGDAKKDSQLIGQFGVGFYSAFMVASKIEVLSKKALDDKAYLWSSDANGYEIDDANKEEQGTSITLYLKDDEFANAYKIESIIEKYSNHIQFPIFMEKEEFTPAKEGEEEGKTELKISQINKANALWRMQKSSLKAEDYERFYEQNFHDSNKPLLYLHTKSEGKLEYNSLFFIPQNAPFDLFRVDYQSGLKLYVKRVFISDDDKELLPTYLRFVRGIIDVEDLPLNVSREILQENQILKGVKEASVKKILGELEKLKNNDKEKYLSFFKTFGKVLKEGLYGFGGEKDSLLKLMLYKSTKGENLRSLEEYKNDLQGEQKEIFYIAGNNESLLRTSPLLEEYKQKNIEVLLMDDEIDSLVTPMLEFEGLKFVAINQVEDKNELSDEEKNTFAPLVAKFKELLKDQVEDVRLTSRLKDSPSCIVYDKNKPDFAMQQLLKQMGQEQNFKPILEINPKHAIFTGLKNNESFSADIATLVLNMAKLSEGMGVDNPAEFNASLTKIINKAFS</sequence>
<evidence type="ECO:0000255" key="1">
    <source>
        <dbReference type="HAMAP-Rule" id="MF_00505"/>
    </source>
</evidence>
<gene>
    <name evidence="1" type="primary">htpG</name>
    <name type="ordered locus">CJJ81176_0546</name>
</gene>
<reference key="1">
    <citation type="submission" date="2006-12" db="EMBL/GenBank/DDBJ databases">
        <authorList>
            <person name="Fouts D.E."/>
            <person name="Nelson K.E."/>
            <person name="Sebastian Y."/>
        </authorList>
    </citation>
    <scope>NUCLEOTIDE SEQUENCE [LARGE SCALE GENOMIC DNA]</scope>
    <source>
        <strain>81-176</strain>
    </source>
</reference>
<keyword id="KW-0067">ATP-binding</keyword>
<keyword id="KW-0143">Chaperone</keyword>
<keyword id="KW-0963">Cytoplasm</keyword>
<keyword id="KW-0547">Nucleotide-binding</keyword>
<keyword id="KW-0346">Stress response</keyword>
<proteinExistence type="inferred from homology"/>
<name>HTPG_CAMJJ</name>